<organism>
    <name type="scientific">Coxiella burnetii (strain Dugway 5J108-111)</name>
    <dbReference type="NCBI Taxonomy" id="434922"/>
    <lineage>
        <taxon>Bacteria</taxon>
        <taxon>Pseudomonadati</taxon>
        <taxon>Pseudomonadota</taxon>
        <taxon>Gammaproteobacteria</taxon>
        <taxon>Legionellales</taxon>
        <taxon>Coxiellaceae</taxon>
        <taxon>Coxiella</taxon>
    </lineage>
</organism>
<evidence type="ECO:0000255" key="1">
    <source>
        <dbReference type="HAMAP-Rule" id="MF_00023"/>
    </source>
</evidence>
<proteinExistence type="inferred from homology"/>
<keyword id="KW-0963">Cytoplasm</keyword>
<keyword id="KW-0694">RNA-binding</keyword>
<dbReference type="EMBL" id="CP000733">
    <property type="protein sequence ID" value="ABS77567.1"/>
    <property type="molecule type" value="Genomic_DNA"/>
</dbReference>
<dbReference type="RefSeq" id="WP_011997064.1">
    <property type="nucleotide sequence ID" value="NC_009727.1"/>
</dbReference>
<dbReference type="SMR" id="A9KGA3"/>
<dbReference type="KEGG" id="cbd:CBUD_1393"/>
<dbReference type="HOGENOM" id="CLU_108953_3_0_6"/>
<dbReference type="Proteomes" id="UP000008555">
    <property type="component" value="Chromosome"/>
</dbReference>
<dbReference type="GO" id="GO:0005829">
    <property type="term" value="C:cytosol"/>
    <property type="evidence" value="ECO:0007669"/>
    <property type="project" value="TreeGrafter"/>
</dbReference>
<dbReference type="GO" id="GO:0003723">
    <property type="term" value="F:RNA binding"/>
    <property type="evidence" value="ECO:0007669"/>
    <property type="project" value="UniProtKB-UniRule"/>
</dbReference>
<dbReference type="GO" id="GO:0070929">
    <property type="term" value="P:trans-translation"/>
    <property type="evidence" value="ECO:0007669"/>
    <property type="project" value="UniProtKB-UniRule"/>
</dbReference>
<dbReference type="CDD" id="cd09294">
    <property type="entry name" value="SmpB"/>
    <property type="match status" value="1"/>
</dbReference>
<dbReference type="Gene3D" id="2.40.280.10">
    <property type="match status" value="1"/>
</dbReference>
<dbReference type="HAMAP" id="MF_00023">
    <property type="entry name" value="SmpB"/>
    <property type="match status" value="1"/>
</dbReference>
<dbReference type="InterPro" id="IPR023620">
    <property type="entry name" value="SmpB"/>
</dbReference>
<dbReference type="InterPro" id="IPR000037">
    <property type="entry name" value="SsrA-bd_prot"/>
</dbReference>
<dbReference type="InterPro" id="IPR020081">
    <property type="entry name" value="SsrA-bd_prot_CS"/>
</dbReference>
<dbReference type="NCBIfam" id="NF003843">
    <property type="entry name" value="PRK05422.1"/>
    <property type="match status" value="1"/>
</dbReference>
<dbReference type="NCBIfam" id="TIGR00086">
    <property type="entry name" value="smpB"/>
    <property type="match status" value="1"/>
</dbReference>
<dbReference type="PANTHER" id="PTHR30308:SF2">
    <property type="entry name" value="SSRA-BINDING PROTEIN"/>
    <property type="match status" value="1"/>
</dbReference>
<dbReference type="PANTHER" id="PTHR30308">
    <property type="entry name" value="TMRNA-BINDING COMPONENT OF TRANS-TRANSLATION TAGGING COMPLEX"/>
    <property type="match status" value="1"/>
</dbReference>
<dbReference type="Pfam" id="PF01668">
    <property type="entry name" value="SmpB"/>
    <property type="match status" value="1"/>
</dbReference>
<dbReference type="SUPFAM" id="SSF74982">
    <property type="entry name" value="Small protein B (SmpB)"/>
    <property type="match status" value="1"/>
</dbReference>
<dbReference type="PROSITE" id="PS01317">
    <property type="entry name" value="SSRP"/>
    <property type="match status" value="1"/>
</dbReference>
<reference key="1">
    <citation type="journal article" date="2009" name="Infect. Immun.">
        <title>Comparative genomics reveal extensive transposon-mediated genomic plasticity and diversity among potential effector proteins within the genus Coxiella.</title>
        <authorList>
            <person name="Beare P.A."/>
            <person name="Unsworth N."/>
            <person name="Andoh M."/>
            <person name="Voth D.E."/>
            <person name="Omsland A."/>
            <person name="Gilk S.D."/>
            <person name="Williams K.P."/>
            <person name="Sobral B.W."/>
            <person name="Kupko J.J. III"/>
            <person name="Porcella S.F."/>
            <person name="Samuel J.E."/>
            <person name="Heinzen R.A."/>
        </authorList>
    </citation>
    <scope>NUCLEOTIDE SEQUENCE [LARGE SCALE GENOMIC DNA]</scope>
    <source>
        <strain>Dugway 5J108-111</strain>
    </source>
</reference>
<feature type="chain" id="PRO_1000074348" description="SsrA-binding protein">
    <location>
        <begin position="1"/>
        <end position="159"/>
    </location>
</feature>
<protein>
    <recommendedName>
        <fullName evidence="1">SsrA-binding protein</fullName>
    </recommendedName>
    <alternativeName>
        <fullName evidence="1">Small protein B</fullName>
    </alternativeName>
</protein>
<accession>A9KGA3</accession>
<name>SSRP_COXBN</name>
<sequence length="159" mass="18429">MNKQISKKPAQRTIALNKKALHDYYVEQRFEAGLVLEGWEVKSIRAGRVQLRDSYVVFKGGEAWLIGAHLSPLPNVAEYMKADPQRSRKLLLNKREIGKLFGAVQKQGLTVVPLDLHWHKNHVKVEIALAKGKKTHDKRETIKRREWEREKHRVLKSHG</sequence>
<gene>
    <name evidence="1" type="primary">smpB</name>
    <name type="ordered locus">CBUD_1393</name>
</gene>
<comment type="function">
    <text evidence="1">Required for rescue of stalled ribosomes mediated by trans-translation. Binds to transfer-messenger RNA (tmRNA), required for stable association of tmRNA with ribosomes. tmRNA and SmpB together mimic tRNA shape, replacing the anticodon stem-loop with SmpB. tmRNA is encoded by the ssrA gene; the 2 termini fold to resemble tRNA(Ala) and it encodes a 'tag peptide', a short internal open reading frame. During trans-translation Ala-aminoacylated tmRNA acts like a tRNA, entering the A-site of stalled ribosomes, displacing the stalled mRNA. The ribosome then switches to translate the ORF on the tmRNA; the nascent peptide is terminated with the 'tag peptide' encoded by the tmRNA and targeted for degradation. The ribosome is freed to recommence translation, which seems to be the essential function of trans-translation.</text>
</comment>
<comment type="subcellular location">
    <subcellularLocation>
        <location evidence="1">Cytoplasm</location>
    </subcellularLocation>
    <text evidence="1">The tmRNA-SmpB complex associates with stalled 70S ribosomes.</text>
</comment>
<comment type="similarity">
    <text evidence="1">Belongs to the SmpB family.</text>
</comment>